<comment type="function">
    <text evidence="4">Atypical bHLH transcription factor that acts as a positive regulator of cell elongation downstream of multiple external and endogenous signals by direct binding to the promoters and activation of the two expansin genes EXPA1 and EXPA8, encoding cell wall loosening enzymes. Transcriptional activity is inhibited when binding to the bHLH transcription factor IBH1.</text>
</comment>
<comment type="subunit">
    <text evidence="4 6">Homodimer (Probable). Interacts with IBH1.</text>
</comment>
<comment type="interaction">
    <interactant intactId="EBI-15197377">
        <id>Q9ZPW3-2</id>
    </interactant>
    <interactant intactId="EBI-4434374">
        <id>Q9C8Z9</id>
        <label>BHLH148</label>
    </interactant>
    <organismsDiffer>false</organismsDiffer>
    <experiments>4</experiments>
</comment>
<comment type="interaction">
    <interactant intactId="EBI-15197377">
        <id>Q9ZPW3-2</id>
    </interactant>
    <interactant intactId="EBI-15192969">
        <id>Q9M0B9</id>
        <label>IBL1</label>
    </interactant>
    <organismsDiffer>false</organismsDiffer>
    <experiments>3</experiments>
</comment>
<comment type="subcellular location">
    <subcellularLocation>
        <location evidence="1">Nucleus</location>
    </subcellularLocation>
</comment>
<comment type="alternative products">
    <event type="alternative splicing"/>
    <isoform>
        <id>Q9ZPW3-1</id>
        <name>1</name>
        <sequence type="displayed"/>
    </isoform>
    <isoform>
        <id>Q9ZPW3-2</id>
        <name>2</name>
        <sequence type="described" ref="VSP_036089"/>
    </isoform>
</comment>
<comment type="tissue specificity">
    <text evidence="3 4">Highly expressed in hypocotyls and cotyledons. Expressed in leaves, stems, and flowers.</text>
</comment>
<comment type="miscellaneous">
    <text evidence="7">Plants over-expressing HBI1 show increased petiole length and early flowering, and plants suppressing HBI1 display dwarf, short-petiole and late-flowering phenotype. Although HBI1 contains a degenerate basic motif it can bind DNA in vitro.</text>
</comment>
<comment type="miscellaneous">
    <molecule>Isoform 2</molecule>
    <text evidence="6">May be due to a competing acceptor splice site.</text>
</comment>
<gene>
    <name type="primary">HBI1</name>
    <name type="synonym">BHLH64</name>
    <name type="synonym">EN79</name>
    <name type="ordered locus">At2g18300</name>
    <name type="ORF">T30D6.19</name>
</gene>
<accession>Q9ZPW3</accession>
<accession>Q8S3D8</accession>
<accession>Q945K8</accession>
<evidence type="ECO:0000255" key="1">
    <source>
        <dbReference type="PROSITE-ProRule" id="PRU00981"/>
    </source>
</evidence>
<evidence type="ECO:0000256" key="2">
    <source>
        <dbReference type="SAM" id="MobiDB-lite"/>
    </source>
</evidence>
<evidence type="ECO:0000269" key="3">
    <source>
    </source>
</evidence>
<evidence type="ECO:0000269" key="4">
    <source>
    </source>
</evidence>
<evidence type="ECO:0000303" key="5">
    <source>
    </source>
</evidence>
<evidence type="ECO:0000305" key="6"/>
<evidence type="ECO:0000305" key="7">
    <source>
    </source>
</evidence>
<reference key="1">
    <citation type="journal article" date="1999" name="Nature">
        <title>Sequence and analysis of chromosome 2 of the plant Arabidopsis thaliana.</title>
        <authorList>
            <person name="Lin X."/>
            <person name="Kaul S."/>
            <person name="Rounsley S.D."/>
            <person name="Shea T.P."/>
            <person name="Benito M.-I."/>
            <person name="Town C.D."/>
            <person name="Fujii C.Y."/>
            <person name="Mason T.M."/>
            <person name="Bowman C.L."/>
            <person name="Barnstead M.E."/>
            <person name="Feldblyum T.V."/>
            <person name="Buell C.R."/>
            <person name="Ketchum K.A."/>
            <person name="Lee J.J."/>
            <person name="Ronning C.M."/>
            <person name="Koo H.L."/>
            <person name="Moffat K.S."/>
            <person name="Cronin L.A."/>
            <person name="Shen M."/>
            <person name="Pai G."/>
            <person name="Van Aken S."/>
            <person name="Umayam L."/>
            <person name="Tallon L.J."/>
            <person name="Gill J.E."/>
            <person name="Adams M.D."/>
            <person name="Carrera A.J."/>
            <person name="Creasy T.H."/>
            <person name="Goodman H.M."/>
            <person name="Somerville C.R."/>
            <person name="Copenhaver G.P."/>
            <person name="Preuss D."/>
            <person name="Nierman W.C."/>
            <person name="White O."/>
            <person name="Eisen J.A."/>
            <person name="Salzberg S.L."/>
            <person name="Fraser C.M."/>
            <person name="Venter J.C."/>
        </authorList>
    </citation>
    <scope>NUCLEOTIDE SEQUENCE [LARGE SCALE GENOMIC DNA]</scope>
    <source>
        <strain>cv. Columbia</strain>
    </source>
</reference>
<reference key="2">
    <citation type="journal article" date="2017" name="Plant J.">
        <title>Araport11: a complete reannotation of the Arabidopsis thaliana reference genome.</title>
        <authorList>
            <person name="Cheng C.Y."/>
            <person name="Krishnakumar V."/>
            <person name="Chan A.P."/>
            <person name="Thibaud-Nissen F."/>
            <person name="Schobel S."/>
            <person name="Town C.D."/>
        </authorList>
    </citation>
    <scope>GENOME REANNOTATION</scope>
    <source>
        <strain>cv. Columbia</strain>
    </source>
</reference>
<reference key="3">
    <citation type="journal article" date="2003" name="Science">
        <title>Empirical analysis of transcriptional activity in the Arabidopsis genome.</title>
        <authorList>
            <person name="Yamada K."/>
            <person name="Lim J."/>
            <person name="Dale J.M."/>
            <person name="Chen H."/>
            <person name="Shinn P."/>
            <person name="Palm C.J."/>
            <person name="Southwick A.M."/>
            <person name="Wu H.C."/>
            <person name="Kim C.J."/>
            <person name="Nguyen M."/>
            <person name="Pham P.K."/>
            <person name="Cheuk R.F."/>
            <person name="Karlin-Newmann G."/>
            <person name="Liu S.X."/>
            <person name="Lam B."/>
            <person name="Sakano H."/>
            <person name="Wu T."/>
            <person name="Yu G."/>
            <person name="Miranda M."/>
            <person name="Quach H.L."/>
            <person name="Tripp M."/>
            <person name="Chang C.H."/>
            <person name="Lee J.M."/>
            <person name="Toriumi M.J."/>
            <person name="Chan M.M."/>
            <person name="Tang C.C."/>
            <person name="Onodera C.S."/>
            <person name="Deng J.M."/>
            <person name="Akiyama K."/>
            <person name="Ansari Y."/>
            <person name="Arakawa T."/>
            <person name="Banh J."/>
            <person name="Banno F."/>
            <person name="Bowser L."/>
            <person name="Brooks S.Y."/>
            <person name="Carninci P."/>
            <person name="Chao Q."/>
            <person name="Choy N."/>
            <person name="Enju A."/>
            <person name="Goldsmith A.D."/>
            <person name="Gurjal M."/>
            <person name="Hansen N.F."/>
            <person name="Hayashizaki Y."/>
            <person name="Johnson-Hopson C."/>
            <person name="Hsuan V.W."/>
            <person name="Iida K."/>
            <person name="Karnes M."/>
            <person name="Khan S."/>
            <person name="Koesema E."/>
            <person name="Ishida J."/>
            <person name="Jiang P.X."/>
            <person name="Jones T."/>
            <person name="Kawai J."/>
            <person name="Kamiya A."/>
            <person name="Meyers C."/>
            <person name="Nakajima M."/>
            <person name="Narusaka M."/>
            <person name="Seki M."/>
            <person name="Sakurai T."/>
            <person name="Satou M."/>
            <person name="Tamse R."/>
            <person name="Vaysberg M."/>
            <person name="Wallender E.K."/>
            <person name="Wong C."/>
            <person name="Yamamura Y."/>
            <person name="Yuan S."/>
            <person name="Shinozaki K."/>
            <person name="Davis R.W."/>
            <person name="Theologis A."/>
            <person name="Ecker J.R."/>
        </authorList>
    </citation>
    <scope>NUCLEOTIDE SEQUENCE [LARGE SCALE MRNA] (ISOFORM 2)</scope>
    <source>
        <strain>cv. Columbia</strain>
    </source>
</reference>
<reference key="4">
    <citation type="journal article" date="2003" name="Mol. Biol. Evol.">
        <title>The basic helix-loop-helix transcription factor family in plants: a genome-wide study of protein structure and functional diversity.</title>
        <authorList>
            <person name="Heim M.A."/>
            <person name="Jakoby M."/>
            <person name="Werber M."/>
            <person name="Martin C."/>
            <person name="Weisshaar B."/>
            <person name="Bailey P.C."/>
        </authorList>
    </citation>
    <scope>NUCLEOTIDE SEQUENCE [MRNA] OF 18-337 (ISOFORM 1)</scope>
    <scope>TISSUE SPECIFICITY</scope>
    <scope>GENE FAMILY</scope>
    <scope>NOMENCLATURE</scope>
    <source>
        <strain>cv. Columbia</strain>
        <tissue>Flower</tissue>
    </source>
</reference>
<reference key="5">
    <citation type="journal article" date="2003" name="Plant Cell">
        <title>The Arabidopsis basic/helix-loop-helix transcription factor family.</title>
        <authorList>
            <person name="Toledo-Ortiz G."/>
            <person name="Huq E."/>
            <person name="Quail P.H."/>
        </authorList>
    </citation>
    <scope>GENE FAMILY</scope>
</reference>
<reference key="6">
    <citation type="journal article" date="2003" name="Plant Cell">
        <title>Update on the basic helix-loop-helix transcription factor gene family in Arabidopsis thaliana.</title>
        <authorList>
            <person name="Bailey P.C."/>
            <person name="Martin C."/>
            <person name="Toledo-Ortiz G."/>
            <person name="Quail P.H."/>
            <person name="Huq E."/>
            <person name="Heim M.A."/>
            <person name="Jakoby M."/>
            <person name="Werber M."/>
            <person name="Weisshaar B."/>
        </authorList>
    </citation>
    <scope>GENE FAMILY</scope>
    <scope>NOMENCLATURE</scope>
</reference>
<reference key="7">
    <citation type="journal article" date="2012" name="Plant Cell">
        <title>A triple helix-loop-helix/basic helix-loop-helix cascade controls cell elongation downstream of multiple hormonal and environmental signaling pathways in Arabidopsis.</title>
        <authorList>
            <person name="Bai M.Y."/>
            <person name="Fan M."/>
            <person name="Oh E."/>
            <person name="Wang Z.Y."/>
        </authorList>
    </citation>
    <scope>FUNCTION</scope>
    <scope>INTERACTION WITH IBH1</scope>
    <scope>TISSUE SPECIFICITY</scope>
</reference>
<feature type="chain" id="PRO_0000358759" description="Transcription factor HBI1">
    <location>
        <begin position="1"/>
        <end position="337"/>
    </location>
</feature>
<feature type="domain" description="bHLH" evidence="1">
    <location>
        <begin position="191"/>
        <end position="241"/>
    </location>
</feature>
<feature type="region of interest" description="Disordered" evidence="2">
    <location>
        <begin position="119"/>
        <end position="180"/>
    </location>
</feature>
<feature type="compositionally biased region" description="Basic and acidic residues" evidence="2">
    <location>
        <begin position="126"/>
        <end position="151"/>
    </location>
</feature>
<feature type="compositionally biased region" description="Polar residues" evidence="2">
    <location>
        <begin position="152"/>
        <end position="165"/>
    </location>
</feature>
<feature type="splice variant" id="VSP_036089" description="In isoform 2." evidence="5">
    <location>
        <begin position="271"/>
        <end position="272"/>
    </location>
</feature>
<feature type="sequence conflict" description="In Ref. 4; AAM10953." evidence="6" ref="4">
    <original>LS</original>
    <variation>SF</variation>
    <location>
        <begin position="302"/>
        <end position="303"/>
    </location>
</feature>
<feature type="sequence conflict" description="In Ref. 4; AAM10953." evidence="6" ref="4">
    <original>S</original>
    <variation>F</variation>
    <location>
        <position position="317"/>
    </location>
</feature>
<name>HBI1_ARATH</name>
<protein>
    <recommendedName>
        <fullName>Transcription factor HBI1</fullName>
    </recommendedName>
    <alternativeName>
        <fullName>Basic helix-loop-helix protein 64</fullName>
        <shortName>AtbHLH64</shortName>
        <shortName>bHLH 64</shortName>
    </alternativeName>
    <alternativeName>
        <fullName>Protein HOMOLOG OF BEE2 INTERACTING WITH IBH1</fullName>
    </alternativeName>
    <alternativeName>
        <fullName>Transcription factor EN 79</fullName>
    </alternativeName>
    <alternativeName>
        <fullName>bHLH transcription factor bHLH064</fullName>
    </alternativeName>
</protein>
<organism>
    <name type="scientific">Arabidopsis thaliana</name>
    <name type="common">Mouse-ear cress</name>
    <dbReference type="NCBI Taxonomy" id="3702"/>
    <lineage>
        <taxon>Eukaryota</taxon>
        <taxon>Viridiplantae</taxon>
        <taxon>Streptophyta</taxon>
        <taxon>Embryophyta</taxon>
        <taxon>Tracheophyta</taxon>
        <taxon>Spermatophyta</taxon>
        <taxon>Magnoliopsida</taxon>
        <taxon>eudicotyledons</taxon>
        <taxon>Gunneridae</taxon>
        <taxon>Pentapetalae</taxon>
        <taxon>rosids</taxon>
        <taxon>malvids</taxon>
        <taxon>Brassicales</taxon>
        <taxon>Brassicaceae</taxon>
        <taxon>Camelineae</taxon>
        <taxon>Arabidopsis</taxon>
    </lineage>
</organism>
<dbReference type="EMBL" id="AC006439">
    <property type="protein sequence ID" value="AAD15506.2"/>
    <property type="molecule type" value="Genomic_DNA"/>
</dbReference>
<dbReference type="EMBL" id="CP002685">
    <property type="protein sequence ID" value="AEC06752.1"/>
    <property type="molecule type" value="Genomic_DNA"/>
</dbReference>
<dbReference type="EMBL" id="CP002685">
    <property type="protein sequence ID" value="AEC06753.1"/>
    <property type="molecule type" value="Genomic_DNA"/>
</dbReference>
<dbReference type="EMBL" id="AF412099">
    <property type="protein sequence ID" value="AAL06552.1"/>
    <property type="molecule type" value="mRNA"/>
</dbReference>
<dbReference type="EMBL" id="AY078030">
    <property type="protein sequence ID" value="AAL77731.1"/>
    <property type="molecule type" value="mRNA"/>
</dbReference>
<dbReference type="EMBL" id="AF488597">
    <property type="protein sequence ID" value="AAM10953.1"/>
    <property type="molecule type" value="mRNA"/>
</dbReference>
<dbReference type="PIR" id="G84562">
    <property type="entry name" value="G84562"/>
</dbReference>
<dbReference type="RefSeq" id="NP_565434.1">
    <molecule id="Q9ZPW3-2"/>
    <property type="nucleotide sequence ID" value="NM_127388.4"/>
</dbReference>
<dbReference type="RefSeq" id="NP_849976.1">
    <molecule id="Q9ZPW3-1"/>
    <property type="nucleotide sequence ID" value="NM_179645.3"/>
</dbReference>
<dbReference type="SMR" id="Q9ZPW3"/>
<dbReference type="BioGRID" id="1703">
    <property type="interactions" value="26"/>
</dbReference>
<dbReference type="FunCoup" id="Q9ZPW3">
    <property type="interactions" value="95"/>
</dbReference>
<dbReference type="IntAct" id="Q9ZPW3">
    <property type="interactions" value="24"/>
</dbReference>
<dbReference type="STRING" id="3702.Q9ZPW3"/>
<dbReference type="PaxDb" id="3702-AT2G18300.3"/>
<dbReference type="ProteomicsDB" id="247163">
    <molecule id="Q9ZPW3-1"/>
</dbReference>
<dbReference type="EnsemblPlants" id="AT2G18300.1">
    <molecule id="Q9ZPW3-2"/>
    <property type="protein sequence ID" value="AT2G18300.1"/>
    <property type="gene ID" value="AT2G18300"/>
</dbReference>
<dbReference type="EnsemblPlants" id="AT2G18300.2">
    <molecule id="Q9ZPW3-1"/>
    <property type="protein sequence ID" value="AT2G18300.2"/>
    <property type="gene ID" value="AT2G18300"/>
</dbReference>
<dbReference type="GeneID" id="816346"/>
<dbReference type="Gramene" id="AT2G18300.1">
    <molecule id="Q9ZPW3-2"/>
    <property type="protein sequence ID" value="AT2G18300.1"/>
    <property type="gene ID" value="AT2G18300"/>
</dbReference>
<dbReference type="Gramene" id="AT2G18300.2">
    <molecule id="Q9ZPW3-1"/>
    <property type="protein sequence ID" value="AT2G18300.2"/>
    <property type="gene ID" value="AT2G18300"/>
</dbReference>
<dbReference type="KEGG" id="ath:AT2G18300"/>
<dbReference type="Araport" id="AT2G18300"/>
<dbReference type="TAIR" id="AT2G18300">
    <property type="gene designation" value="HBI1"/>
</dbReference>
<dbReference type="eggNOG" id="ENOG502SH3S">
    <property type="taxonomic scope" value="Eukaryota"/>
</dbReference>
<dbReference type="InParanoid" id="Q9ZPW3"/>
<dbReference type="PhylomeDB" id="Q9ZPW3"/>
<dbReference type="PRO" id="PR:Q9ZPW3"/>
<dbReference type="Proteomes" id="UP000006548">
    <property type="component" value="Chromosome 2"/>
</dbReference>
<dbReference type="ExpressionAtlas" id="Q9ZPW3">
    <property type="expression patterns" value="baseline and differential"/>
</dbReference>
<dbReference type="GO" id="GO:0005634">
    <property type="term" value="C:nucleus"/>
    <property type="evidence" value="ECO:0007669"/>
    <property type="project" value="UniProtKB-SubCell"/>
</dbReference>
<dbReference type="GO" id="GO:0003677">
    <property type="term" value="F:DNA binding"/>
    <property type="evidence" value="ECO:0007669"/>
    <property type="project" value="UniProtKB-KW"/>
</dbReference>
<dbReference type="GO" id="GO:0046983">
    <property type="term" value="F:protein dimerization activity"/>
    <property type="evidence" value="ECO:0007669"/>
    <property type="project" value="InterPro"/>
</dbReference>
<dbReference type="GO" id="GO:0009742">
    <property type="term" value="P:brassinosteroid mediated signaling pathway"/>
    <property type="evidence" value="ECO:0007669"/>
    <property type="project" value="UniProtKB-KW"/>
</dbReference>
<dbReference type="GO" id="GO:0009740">
    <property type="term" value="P:gibberellic acid mediated signaling pathway"/>
    <property type="evidence" value="ECO:0007669"/>
    <property type="project" value="UniProtKB-KW"/>
</dbReference>
<dbReference type="GO" id="GO:0006355">
    <property type="term" value="P:regulation of DNA-templated transcription"/>
    <property type="evidence" value="ECO:0007669"/>
    <property type="project" value="InterPro"/>
</dbReference>
<dbReference type="CDD" id="cd18919">
    <property type="entry name" value="bHLH_AtBPE_like"/>
    <property type="match status" value="1"/>
</dbReference>
<dbReference type="FunFam" id="4.10.280.10:FF:000002">
    <property type="entry name" value="Basic helix-loop-helix transcription factor"/>
    <property type="match status" value="1"/>
</dbReference>
<dbReference type="Gene3D" id="4.10.280.10">
    <property type="entry name" value="Helix-loop-helix DNA-binding domain"/>
    <property type="match status" value="1"/>
</dbReference>
<dbReference type="InterPro" id="IPR011598">
    <property type="entry name" value="bHLH_dom"/>
</dbReference>
<dbReference type="InterPro" id="IPR024097">
    <property type="entry name" value="bHLH_ZIP_TF"/>
</dbReference>
<dbReference type="InterPro" id="IPR036638">
    <property type="entry name" value="HLH_DNA-bd_sf"/>
</dbReference>
<dbReference type="PANTHER" id="PTHR12565">
    <property type="entry name" value="STEROL REGULATORY ELEMENT-BINDING PROTEIN"/>
    <property type="match status" value="1"/>
</dbReference>
<dbReference type="PANTHER" id="PTHR12565:SF442">
    <property type="entry name" value="TRANSCRIPTION FACTOR HBI1"/>
    <property type="match status" value="1"/>
</dbReference>
<dbReference type="Pfam" id="PF00010">
    <property type="entry name" value="HLH"/>
    <property type="match status" value="1"/>
</dbReference>
<dbReference type="SMART" id="SM00353">
    <property type="entry name" value="HLH"/>
    <property type="match status" value="1"/>
</dbReference>
<dbReference type="SUPFAM" id="SSF47459">
    <property type="entry name" value="HLH, helix-loop-helix DNA-binding domain"/>
    <property type="match status" value="1"/>
</dbReference>
<dbReference type="PROSITE" id="PS50888">
    <property type="entry name" value="BHLH"/>
    <property type="match status" value="1"/>
</dbReference>
<sequence length="337" mass="37747">MLEGLVSQESLSLNSMDMSVLERLKWVQQQQQQLQQVVSHSSNNSPELLQILQFHGSNNDELLESSFSQFQMLGSGFGPNYNMGFGPPHESISRTSSCHMEPVDTMEVLLKTGEETRAVALKNKRKPEVKTREEQKTEKKIKVEAETESSMKGKSNMGNTEASSDTSKETSKGASENQKLDYIHVRARRGQATDRHSLAERARREKISKKMKYLQDIVPGCNKVTGKAGMLDEIINYVQCLQRQVEFLSMKLAVLNPELELAVEDVSVKQFQAYFTNVVASKQSIMVDVPLFPLDQQGSLDLSAINPNQTTSIEAPSGSWETQSQSLYNTSSLGFHY</sequence>
<keyword id="KW-0025">Alternative splicing</keyword>
<keyword id="KW-1070">Brassinosteroid signaling pathway</keyword>
<keyword id="KW-0238">DNA-binding</keyword>
<keyword id="KW-0939">Gibberellin signaling pathway</keyword>
<keyword id="KW-0341">Growth regulation</keyword>
<keyword id="KW-0539">Nucleus</keyword>
<keyword id="KW-1185">Reference proteome</keyword>
<keyword id="KW-0804">Transcription</keyword>
<keyword id="KW-0805">Transcription regulation</keyword>
<proteinExistence type="evidence at protein level"/>